<accession>Q5LAS4</accession>
<reference key="1">
    <citation type="journal article" date="2005" name="Science">
        <title>Extensive DNA inversions in the B. fragilis genome control variable gene expression.</title>
        <authorList>
            <person name="Cerdeno-Tarraga A.-M."/>
            <person name="Patrick S."/>
            <person name="Crossman L.C."/>
            <person name="Blakely G."/>
            <person name="Abratt V."/>
            <person name="Lennard N."/>
            <person name="Poxton I."/>
            <person name="Duerden B."/>
            <person name="Harris B."/>
            <person name="Quail M.A."/>
            <person name="Barron A."/>
            <person name="Clark L."/>
            <person name="Corton C."/>
            <person name="Doggett J."/>
            <person name="Holden M.T.G."/>
            <person name="Larke N."/>
            <person name="Line A."/>
            <person name="Lord A."/>
            <person name="Norbertczak H."/>
            <person name="Ormond D."/>
            <person name="Price C."/>
            <person name="Rabbinowitsch E."/>
            <person name="Woodward J."/>
            <person name="Barrell B.G."/>
            <person name="Parkhill J."/>
        </authorList>
    </citation>
    <scope>NUCLEOTIDE SEQUENCE [LARGE SCALE GENOMIC DNA]</scope>
    <source>
        <strain>ATCC 25285 / DSM 2151 / CCUG 4856 / JCM 11019 / LMG 10263 / NCTC 9343 / Onslow / VPI 2553 / EN-2</strain>
    </source>
</reference>
<proteinExistence type="inferred from homology"/>
<protein>
    <recommendedName>
        <fullName evidence="1">Phenylalanine--tRNA ligase alpha subunit</fullName>
        <ecNumber evidence="1">6.1.1.20</ecNumber>
    </recommendedName>
    <alternativeName>
        <fullName evidence="1">Phenylalanyl-tRNA synthetase alpha subunit</fullName>
        <shortName evidence="1">PheRS</shortName>
    </alternativeName>
</protein>
<name>SYFA_BACFN</name>
<dbReference type="EC" id="6.1.1.20" evidence="1"/>
<dbReference type="EMBL" id="CR626927">
    <property type="protein sequence ID" value="CAH08799.1"/>
    <property type="molecule type" value="Genomic_DNA"/>
</dbReference>
<dbReference type="RefSeq" id="WP_005789293.1">
    <property type="nucleotide sequence ID" value="NZ_UFTH01000001.1"/>
</dbReference>
<dbReference type="SMR" id="Q5LAS4"/>
<dbReference type="PaxDb" id="272559-BF9343_3018"/>
<dbReference type="GeneID" id="60367745"/>
<dbReference type="KEGG" id="bfs:BF9343_3018"/>
<dbReference type="eggNOG" id="COG0016">
    <property type="taxonomic scope" value="Bacteria"/>
</dbReference>
<dbReference type="HOGENOM" id="CLU_025086_0_1_10"/>
<dbReference type="Proteomes" id="UP000006731">
    <property type="component" value="Chromosome"/>
</dbReference>
<dbReference type="GO" id="GO:0005737">
    <property type="term" value="C:cytoplasm"/>
    <property type="evidence" value="ECO:0007669"/>
    <property type="project" value="UniProtKB-SubCell"/>
</dbReference>
<dbReference type="GO" id="GO:0005524">
    <property type="term" value="F:ATP binding"/>
    <property type="evidence" value="ECO:0007669"/>
    <property type="project" value="UniProtKB-UniRule"/>
</dbReference>
<dbReference type="GO" id="GO:0000287">
    <property type="term" value="F:magnesium ion binding"/>
    <property type="evidence" value="ECO:0007669"/>
    <property type="project" value="UniProtKB-UniRule"/>
</dbReference>
<dbReference type="GO" id="GO:0004826">
    <property type="term" value="F:phenylalanine-tRNA ligase activity"/>
    <property type="evidence" value="ECO:0007669"/>
    <property type="project" value="UniProtKB-UniRule"/>
</dbReference>
<dbReference type="GO" id="GO:0000049">
    <property type="term" value="F:tRNA binding"/>
    <property type="evidence" value="ECO:0007669"/>
    <property type="project" value="InterPro"/>
</dbReference>
<dbReference type="GO" id="GO:0006432">
    <property type="term" value="P:phenylalanyl-tRNA aminoacylation"/>
    <property type="evidence" value="ECO:0007669"/>
    <property type="project" value="UniProtKB-UniRule"/>
</dbReference>
<dbReference type="CDD" id="cd00496">
    <property type="entry name" value="PheRS_alpha_core"/>
    <property type="match status" value="1"/>
</dbReference>
<dbReference type="FunFam" id="3.30.930.10:FF:000003">
    <property type="entry name" value="Phenylalanine--tRNA ligase alpha subunit"/>
    <property type="match status" value="1"/>
</dbReference>
<dbReference type="Gene3D" id="3.30.930.10">
    <property type="entry name" value="Bira Bifunctional Protein, Domain 2"/>
    <property type="match status" value="1"/>
</dbReference>
<dbReference type="HAMAP" id="MF_00281">
    <property type="entry name" value="Phe_tRNA_synth_alpha1"/>
    <property type="match status" value="1"/>
</dbReference>
<dbReference type="InterPro" id="IPR006195">
    <property type="entry name" value="aa-tRNA-synth_II"/>
</dbReference>
<dbReference type="InterPro" id="IPR045864">
    <property type="entry name" value="aa-tRNA-synth_II/BPL/LPL"/>
</dbReference>
<dbReference type="InterPro" id="IPR004529">
    <property type="entry name" value="Phe-tRNA-synth_IIc_asu"/>
</dbReference>
<dbReference type="InterPro" id="IPR004188">
    <property type="entry name" value="Phe-tRNA_ligase_II_N"/>
</dbReference>
<dbReference type="InterPro" id="IPR022911">
    <property type="entry name" value="Phe_tRNA_ligase_alpha1_bac"/>
</dbReference>
<dbReference type="InterPro" id="IPR002319">
    <property type="entry name" value="Phenylalanyl-tRNA_Synthase"/>
</dbReference>
<dbReference type="InterPro" id="IPR010978">
    <property type="entry name" value="tRNA-bd_arm"/>
</dbReference>
<dbReference type="NCBIfam" id="TIGR00468">
    <property type="entry name" value="pheS"/>
    <property type="match status" value="1"/>
</dbReference>
<dbReference type="PANTHER" id="PTHR11538:SF41">
    <property type="entry name" value="PHENYLALANINE--TRNA LIGASE, MITOCHONDRIAL"/>
    <property type="match status" value="1"/>
</dbReference>
<dbReference type="PANTHER" id="PTHR11538">
    <property type="entry name" value="PHENYLALANYL-TRNA SYNTHETASE"/>
    <property type="match status" value="1"/>
</dbReference>
<dbReference type="Pfam" id="PF02912">
    <property type="entry name" value="Phe_tRNA-synt_N"/>
    <property type="match status" value="1"/>
</dbReference>
<dbReference type="Pfam" id="PF01409">
    <property type="entry name" value="tRNA-synt_2d"/>
    <property type="match status" value="1"/>
</dbReference>
<dbReference type="SUPFAM" id="SSF55681">
    <property type="entry name" value="Class II aaRS and biotin synthetases"/>
    <property type="match status" value="1"/>
</dbReference>
<dbReference type="SUPFAM" id="SSF46589">
    <property type="entry name" value="tRNA-binding arm"/>
    <property type="match status" value="1"/>
</dbReference>
<dbReference type="PROSITE" id="PS50862">
    <property type="entry name" value="AA_TRNA_LIGASE_II"/>
    <property type="match status" value="1"/>
</dbReference>
<sequence>MIAKINQLLEEVGALKAANAEELEVLRIKYLSKKGAINDLMADFRNVAAEQKKEVGMKLNELKTKAQEKINALKEQFDNQDNGQDDLDLTRSAYPVELGTRHPLSIVRNEIIDIFARLGFNIAEGPEIEDDWHVFSALNFAEDHPARDMQDTFFIESHPDVLLRTHTSSVQSRVMEVSQPPIRIICPGRVYRNEAISYRAHCFFHQVEALYVDRNVSFTDLKQVLLLFAKEMFGADTKIRLRPSYFPFTEPSAEMDISCNICGGKGCPFCKHTGWVEILGCGMVDPNVLDANGIDSKVYSGYALGMGIERITNLKYQVKDLRMFSENDTRFLKEFEAAY</sequence>
<evidence type="ECO:0000255" key="1">
    <source>
        <dbReference type="HAMAP-Rule" id="MF_00281"/>
    </source>
</evidence>
<feature type="chain" id="PRO_0000231963" description="Phenylalanine--tRNA ligase alpha subunit">
    <location>
        <begin position="1"/>
        <end position="339"/>
    </location>
</feature>
<feature type="binding site" evidence="1">
    <location>
        <position position="250"/>
    </location>
    <ligand>
        <name>Mg(2+)</name>
        <dbReference type="ChEBI" id="CHEBI:18420"/>
        <note>shared with beta subunit</note>
    </ligand>
</feature>
<gene>
    <name evidence="1" type="primary">pheS</name>
    <name type="ordered locus">BF3104</name>
</gene>
<comment type="catalytic activity">
    <reaction evidence="1">
        <text>tRNA(Phe) + L-phenylalanine + ATP = L-phenylalanyl-tRNA(Phe) + AMP + diphosphate + H(+)</text>
        <dbReference type="Rhea" id="RHEA:19413"/>
        <dbReference type="Rhea" id="RHEA-COMP:9668"/>
        <dbReference type="Rhea" id="RHEA-COMP:9699"/>
        <dbReference type="ChEBI" id="CHEBI:15378"/>
        <dbReference type="ChEBI" id="CHEBI:30616"/>
        <dbReference type="ChEBI" id="CHEBI:33019"/>
        <dbReference type="ChEBI" id="CHEBI:58095"/>
        <dbReference type="ChEBI" id="CHEBI:78442"/>
        <dbReference type="ChEBI" id="CHEBI:78531"/>
        <dbReference type="ChEBI" id="CHEBI:456215"/>
        <dbReference type="EC" id="6.1.1.20"/>
    </reaction>
</comment>
<comment type="cofactor">
    <cofactor evidence="1">
        <name>Mg(2+)</name>
        <dbReference type="ChEBI" id="CHEBI:18420"/>
    </cofactor>
    <text evidence="1">Binds 2 magnesium ions per tetramer.</text>
</comment>
<comment type="subunit">
    <text evidence="1">Tetramer of two alpha and two beta subunits.</text>
</comment>
<comment type="subcellular location">
    <subcellularLocation>
        <location evidence="1">Cytoplasm</location>
    </subcellularLocation>
</comment>
<comment type="similarity">
    <text evidence="1">Belongs to the class-II aminoacyl-tRNA synthetase family. Phe-tRNA synthetase alpha subunit type 1 subfamily.</text>
</comment>
<keyword id="KW-0030">Aminoacyl-tRNA synthetase</keyword>
<keyword id="KW-0067">ATP-binding</keyword>
<keyword id="KW-0963">Cytoplasm</keyword>
<keyword id="KW-0436">Ligase</keyword>
<keyword id="KW-0460">Magnesium</keyword>
<keyword id="KW-0479">Metal-binding</keyword>
<keyword id="KW-0547">Nucleotide-binding</keyword>
<keyword id="KW-0648">Protein biosynthesis</keyword>
<organism>
    <name type="scientific">Bacteroides fragilis (strain ATCC 25285 / DSM 2151 / CCUG 4856 / JCM 11019 / LMG 10263 / NCTC 9343 / Onslow / VPI 2553 / EN-2)</name>
    <dbReference type="NCBI Taxonomy" id="272559"/>
    <lineage>
        <taxon>Bacteria</taxon>
        <taxon>Pseudomonadati</taxon>
        <taxon>Bacteroidota</taxon>
        <taxon>Bacteroidia</taxon>
        <taxon>Bacteroidales</taxon>
        <taxon>Bacteroidaceae</taxon>
        <taxon>Bacteroides</taxon>
    </lineage>
</organism>